<name>NADK_STRR6</name>
<accession>P65780</accession>
<accession>Q97QV0</accession>
<gene>
    <name evidence="1" type="primary">nadK</name>
    <name type="ordered locus">spr1005</name>
</gene>
<reference key="1">
    <citation type="journal article" date="2001" name="J. Bacteriol.">
        <title>Genome of the bacterium Streptococcus pneumoniae strain R6.</title>
        <authorList>
            <person name="Hoskins J."/>
            <person name="Alborn W.E. Jr."/>
            <person name="Arnold J."/>
            <person name="Blaszczak L.C."/>
            <person name="Burgett S."/>
            <person name="DeHoff B.S."/>
            <person name="Estrem S.T."/>
            <person name="Fritz L."/>
            <person name="Fu D.-J."/>
            <person name="Fuller W."/>
            <person name="Geringer C."/>
            <person name="Gilmour R."/>
            <person name="Glass J.S."/>
            <person name="Khoja H."/>
            <person name="Kraft A.R."/>
            <person name="Lagace R.E."/>
            <person name="LeBlanc D.J."/>
            <person name="Lee L.N."/>
            <person name="Lefkowitz E.J."/>
            <person name="Lu J."/>
            <person name="Matsushima P."/>
            <person name="McAhren S.M."/>
            <person name="McHenney M."/>
            <person name="McLeaster K."/>
            <person name="Mundy C.W."/>
            <person name="Nicas T.I."/>
            <person name="Norris F.H."/>
            <person name="O'Gara M."/>
            <person name="Peery R.B."/>
            <person name="Robertson G.T."/>
            <person name="Rockey P."/>
            <person name="Sun P.-M."/>
            <person name="Winkler M.E."/>
            <person name="Yang Y."/>
            <person name="Young-Bellido M."/>
            <person name="Zhao G."/>
            <person name="Zook C.A."/>
            <person name="Baltz R.H."/>
            <person name="Jaskunas S.R."/>
            <person name="Rosteck P.R. Jr."/>
            <person name="Skatrud P.L."/>
            <person name="Glass J.I."/>
        </authorList>
    </citation>
    <scope>NUCLEOTIDE SEQUENCE [LARGE SCALE GENOMIC DNA]</scope>
    <source>
        <strain>ATCC BAA-255 / R6</strain>
    </source>
</reference>
<keyword id="KW-0067">ATP-binding</keyword>
<keyword id="KW-0963">Cytoplasm</keyword>
<keyword id="KW-0418">Kinase</keyword>
<keyword id="KW-0520">NAD</keyword>
<keyword id="KW-0521">NADP</keyword>
<keyword id="KW-0547">Nucleotide-binding</keyword>
<keyword id="KW-1185">Reference proteome</keyword>
<keyword id="KW-0808">Transferase</keyword>
<protein>
    <recommendedName>
        <fullName evidence="1">NAD kinase</fullName>
        <ecNumber evidence="1">2.7.1.23</ecNumber>
    </recommendedName>
    <alternativeName>
        <fullName evidence="1">ATP-dependent NAD kinase</fullName>
    </alternativeName>
</protein>
<comment type="function">
    <text evidence="1">Involved in the regulation of the intracellular balance of NAD and NADP, and is a key enzyme in the biosynthesis of NADP. Catalyzes specifically the phosphorylation on 2'-hydroxyl of the adenosine moiety of NAD to yield NADP.</text>
</comment>
<comment type="catalytic activity">
    <reaction evidence="1">
        <text>NAD(+) + ATP = ADP + NADP(+) + H(+)</text>
        <dbReference type="Rhea" id="RHEA:18629"/>
        <dbReference type="ChEBI" id="CHEBI:15378"/>
        <dbReference type="ChEBI" id="CHEBI:30616"/>
        <dbReference type="ChEBI" id="CHEBI:57540"/>
        <dbReference type="ChEBI" id="CHEBI:58349"/>
        <dbReference type="ChEBI" id="CHEBI:456216"/>
        <dbReference type="EC" id="2.7.1.23"/>
    </reaction>
</comment>
<comment type="cofactor">
    <cofactor evidence="1">
        <name>a divalent metal cation</name>
        <dbReference type="ChEBI" id="CHEBI:60240"/>
    </cofactor>
</comment>
<comment type="subcellular location">
    <subcellularLocation>
        <location evidence="1">Cytoplasm</location>
    </subcellularLocation>
</comment>
<comment type="similarity">
    <text evidence="1">Belongs to the NAD kinase family.</text>
</comment>
<comment type="sequence caution" evidence="2">
    <conflict type="erroneous initiation">
        <sequence resource="EMBL-CDS" id="AAK99809"/>
    </conflict>
    <text>Extended N-terminus.</text>
</comment>
<dbReference type="EC" id="2.7.1.23" evidence="1"/>
<dbReference type="EMBL" id="AE007317">
    <property type="protein sequence ID" value="AAK99809.1"/>
    <property type="status" value="ALT_INIT"/>
    <property type="molecule type" value="Genomic_DNA"/>
</dbReference>
<dbReference type="PIR" id="E97997">
    <property type="entry name" value="E97997"/>
</dbReference>
<dbReference type="RefSeq" id="NP_358599.1">
    <property type="nucleotide sequence ID" value="NC_003098.1"/>
</dbReference>
<dbReference type="RefSeq" id="WP_000799053.1">
    <property type="nucleotide sequence ID" value="NC_003098.1"/>
</dbReference>
<dbReference type="SMR" id="P65780"/>
<dbReference type="STRING" id="171101.spr1005"/>
<dbReference type="DNASU" id="934633"/>
<dbReference type="KEGG" id="spr:spr1005"/>
<dbReference type="PATRIC" id="fig|171101.6.peg.1093"/>
<dbReference type="eggNOG" id="COG0061">
    <property type="taxonomic scope" value="Bacteria"/>
</dbReference>
<dbReference type="HOGENOM" id="CLU_008831_0_3_9"/>
<dbReference type="Proteomes" id="UP000000586">
    <property type="component" value="Chromosome"/>
</dbReference>
<dbReference type="GO" id="GO:0005737">
    <property type="term" value="C:cytoplasm"/>
    <property type="evidence" value="ECO:0007669"/>
    <property type="project" value="UniProtKB-SubCell"/>
</dbReference>
<dbReference type="GO" id="GO:0005524">
    <property type="term" value="F:ATP binding"/>
    <property type="evidence" value="ECO:0007669"/>
    <property type="project" value="UniProtKB-KW"/>
</dbReference>
<dbReference type="GO" id="GO:0046872">
    <property type="term" value="F:metal ion binding"/>
    <property type="evidence" value="ECO:0007669"/>
    <property type="project" value="UniProtKB-UniRule"/>
</dbReference>
<dbReference type="GO" id="GO:0051287">
    <property type="term" value="F:NAD binding"/>
    <property type="evidence" value="ECO:0007669"/>
    <property type="project" value="UniProtKB-ARBA"/>
</dbReference>
<dbReference type="GO" id="GO:0003951">
    <property type="term" value="F:NAD+ kinase activity"/>
    <property type="evidence" value="ECO:0000318"/>
    <property type="project" value="GO_Central"/>
</dbReference>
<dbReference type="GO" id="GO:0019674">
    <property type="term" value="P:NAD metabolic process"/>
    <property type="evidence" value="ECO:0007669"/>
    <property type="project" value="InterPro"/>
</dbReference>
<dbReference type="GO" id="GO:0006741">
    <property type="term" value="P:NADP biosynthetic process"/>
    <property type="evidence" value="ECO:0000318"/>
    <property type="project" value="GO_Central"/>
</dbReference>
<dbReference type="FunFam" id="2.60.200.30:FF:000002">
    <property type="entry name" value="NAD kinase"/>
    <property type="match status" value="1"/>
</dbReference>
<dbReference type="Gene3D" id="3.40.50.10330">
    <property type="entry name" value="Probable inorganic polyphosphate/atp-NAD kinase, domain 1"/>
    <property type="match status" value="1"/>
</dbReference>
<dbReference type="Gene3D" id="2.60.200.30">
    <property type="entry name" value="Probable inorganic polyphosphate/atp-NAD kinase, domain 2"/>
    <property type="match status" value="1"/>
</dbReference>
<dbReference type="HAMAP" id="MF_00361">
    <property type="entry name" value="NAD_kinase"/>
    <property type="match status" value="1"/>
</dbReference>
<dbReference type="InterPro" id="IPR017438">
    <property type="entry name" value="ATP-NAD_kinase_N"/>
</dbReference>
<dbReference type="InterPro" id="IPR017437">
    <property type="entry name" value="ATP-NAD_kinase_PpnK-typ_C"/>
</dbReference>
<dbReference type="InterPro" id="IPR016064">
    <property type="entry name" value="NAD/diacylglycerol_kinase_sf"/>
</dbReference>
<dbReference type="InterPro" id="IPR002504">
    <property type="entry name" value="NADK"/>
</dbReference>
<dbReference type="NCBIfam" id="NF003424">
    <property type="entry name" value="PRK04885.1"/>
    <property type="match status" value="1"/>
</dbReference>
<dbReference type="PANTHER" id="PTHR20275">
    <property type="entry name" value="NAD KINASE"/>
    <property type="match status" value="1"/>
</dbReference>
<dbReference type="PANTHER" id="PTHR20275:SF0">
    <property type="entry name" value="NAD KINASE"/>
    <property type="match status" value="1"/>
</dbReference>
<dbReference type="Pfam" id="PF20143">
    <property type="entry name" value="NAD_kinase_C"/>
    <property type="match status" value="1"/>
</dbReference>
<dbReference type="SUPFAM" id="SSF111331">
    <property type="entry name" value="NAD kinase/diacylglycerol kinase-like"/>
    <property type="match status" value="1"/>
</dbReference>
<proteinExistence type="inferred from homology"/>
<organism>
    <name type="scientific">Streptococcus pneumoniae (strain ATCC BAA-255 / R6)</name>
    <dbReference type="NCBI Taxonomy" id="171101"/>
    <lineage>
        <taxon>Bacteria</taxon>
        <taxon>Bacillati</taxon>
        <taxon>Bacillota</taxon>
        <taxon>Bacilli</taxon>
        <taxon>Lactobacillales</taxon>
        <taxon>Streptococcaceae</taxon>
        <taxon>Streptococcus</taxon>
    </lineage>
</organism>
<evidence type="ECO:0000255" key="1">
    <source>
        <dbReference type="HAMAP-Rule" id="MF_00361"/>
    </source>
</evidence>
<evidence type="ECO:0000305" key="2"/>
<feature type="chain" id="PRO_0000120671" description="NAD kinase">
    <location>
        <begin position="1"/>
        <end position="272"/>
    </location>
</feature>
<feature type="active site" description="Proton acceptor" evidence="1">
    <location>
        <position position="50"/>
    </location>
</feature>
<feature type="binding site" evidence="1">
    <location>
        <begin position="50"/>
        <end position="51"/>
    </location>
    <ligand>
        <name>NAD(+)</name>
        <dbReference type="ChEBI" id="CHEBI:57540"/>
    </ligand>
</feature>
<feature type="binding site" evidence="1">
    <location>
        <begin position="126"/>
        <end position="127"/>
    </location>
    <ligand>
        <name>NAD(+)</name>
        <dbReference type="ChEBI" id="CHEBI:57540"/>
    </ligand>
</feature>
<feature type="binding site" evidence="1">
    <location>
        <position position="152"/>
    </location>
    <ligand>
        <name>NAD(+)</name>
        <dbReference type="ChEBI" id="CHEBI:57540"/>
    </ligand>
</feature>
<feature type="binding site" evidence="1">
    <location>
        <position position="154"/>
    </location>
    <ligand>
        <name>NAD(+)</name>
        <dbReference type="ChEBI" id="CHEBI:57540"/>
    </ligand>
</feature>
<feature type="binding site" evidence="1">
    <location>
        <begin position="165"/>
        <end position="170"/>
    </location>
    <ligand>
        <name>NAD(+)</name>
        <dbReference type="ChEBI" id="CHEBI:57540"/>
    </ligand>
</feature>
<feature type="binding site" evidence="1">
    <location>
        <position position="189"/>
    </location>
    <ligand>
        <name>NAD(+)</name>
        <dbReference type="ChEBI" id="CHEBI:57540"/>
    </ligand>
</feature>
<sequence>MKNTGKRIDLIANRKPQSQRVLYELRDRLKRNQFILNDTNPDIVISIGGDGMLLSAFHKYENQLDKVRFIGLHTGHLGFYTDYRDFELDKLVTNLQLDTGARVSYPVLNVKVFLENGEVKIFRALNEASIRRSDRTMVADIVINGVPFERFRGDGLTVSTPTGSTAYNKSLGGAVLHPTIEALQLTEIASLNNRVYRTLGSSIIVPKKDKIELIPTRNDYHTISVDNSVYSFRNIERIEYQIDHHKIHFVATPSHTSFWNRVKDAFIGEVDE</sequence>